<accession>Q68FP3</accession>
<accession>A1EC85</accession>
<accession>Q6IVB4</accession>
<proteinExistence type="inferred from homology"/>
<dbReference type="EMBL" id="AY620903">
    <property type="protein sequence ID" value="AAT39514.1"/>
    <property type="status" value="ALT_INIT"/>
    <property type="molecule type" value="mRNA"/>
</dbReference>
<dbReference type="EMBL" id="EF121992">
    <property type="protein sequence ID" value="ABL63431.1"/>
    <property type="molecule type" value="mRNA"/>
</dbReference>
<dbReference type="EMBL" id="EF121993">
    <property type="protein sequence ID" value="ABL63432.1"/>
    <property type="molecule type" value="mRNA"/>
</dbReference>
<dbReference type="EMBL" id="BC079460">
    <property type="protein sequence ID" value="AAH79460.1"/>
    <property type="molecule type" value="mRNA"/>
</dbReference>
<dbReference type="RefSeq" id="NP_001004202.1">
    <property type="nucleotide sequence ID" value="NM_001004202.3"/>
</dbReference>
<dbReference type="SMR" id="Q68FP3"/>
<dbReference type="FunCoup" id="Q68FP3">
    <property type="interactions" value="159"/>
</dbReference>
<dbReference type="STRING" id="10116.ENSRNOP00000048296"/>
<dbReference type="PhosphoSitePlus" id="Q68FP3"/>
<dbReference type="PaxDb" id="10116-ENSRNOP00000048296"/>
<dbReference type="GeneID" id="287910"/>
<dbReference type="KEGG" id="rno:287910"/>
<dbReference type="AGR" id="RGD:1303200"/>
<dbReference type="CTD" id="20305"/>
<dbReference type="RGD" id="1303200">
    <property type="gene designation" value="Ccl6"/>
</dbReference>
<dbReference type="VEuPathDB" id="HostDB:ENSRNOG00000030021"/>
<dbReference type="eggNOG" id="ENOG502TJX7">
    <property type="taxonomic scope" value="Eukaryota"/>
</dbReference>
<dbReference type="HOGENOM" id="CLU_141716_4_1_1"/>
<dbReference type="InParanoid" id="Q68FP3"/>
<dbReference type="OrthoDB" id="59893at9989"/>
<dbReference type="PhylomeDB" id="Q68FP3"/>
<dbReference type="TreeFam" id="TF334888"/>
<dbReference type="Reactome" id="R-RNO-416476">
    <property type="pathway name" value="G alpha (q) signalling events"/>
</dbReference>
<dbReference type="Reactome" id="R-RNO-418594">
    <property type="pathway name" value="G alpha (i) signalling events"/>
</dbReference>
<dbReference type="Reactome" id="R-RNO-444473">
    <property type="pathway name" value="Formyl peptide receptors bind formyl peptides and many other ligands"/>
</dbReference>
<dbReference type="PRO" id="PR:Q68FP3"/>
<dbReference type="Proteomes" id="UP000002494">
    <property type="component" value="Chromosome 10"/>
</dbReference>
<dbReference type="Bgee" id="ENSRNOG00000030021">
    <property type="expression patterns" value="Expressed in lung and 18 other cell types or tissues"/>
</dbReference>
<dbReference type="GO" id="GO:0005615">
    <property type="term" value="C:extracellular space"/>
    <property type="evidence" value="ECO:0000318"/>
    <property type="project" value="GO_Central"/>
</dbReference>
<dbReference type="GO" id="GO:0048020">
    <property type="term" value="F:CCR chemokine receptor binding"/>
    <property type="evidence" value="ECO:0000318"/>
    <property type="project" value="GO_Central"/>
</dbReference>
<dbReference type="GO" id="GO:0008009">
    <property type="term" value="F:chemokine activity"/>
    <property type="evidence" value="ECO:0000314"/>
    <property type="project" value="RGD"/>
</dbReference>
<dbReference type="GO" id="GO:0061844">
    <property type="term" value="P:antimicrobial humoral immune response mediated by antimicrobial peptide"/>
    <property type="evidence" value="ECO:0000318"/>
    <property type="project" value="GO_Central"/>
</dbReference>
<dbReference type="GO" id="GO:0060326">
    <property type="term" value="P:cell chemotaxis"/>
    <property type="evidence" value="ECO:0000314"/>
    <property type="project" value="RGD"/>
</dbReference>
<dbReference type="GO" id="GO:0070098">
    <property type="term" value="P:chemokine-mediated signaling pathway"/>
    <property type="evidence" value="ECO:0000318"/>
    <property type="project" value="GO_Central"/>
</dbReference>
<dbReference type="GO" id="GO:0006954">
    <property type="term" value="P:inflammatory response"/>
    <property type="evidence" value="ECO:0000318"/>
    <property type="project" value="GO_Central"/>
</dbReference>
<dbReference type="GO" id="GO:0030316">
    <property type="term" value="P:osteoclast differentiation"/>
    <property type="evidence" value="ECO:0007007"/>
    <property type="project" value="RGD"/>
</dbReference>
<dbReference type="GO" id="GO:0030335">
    <property type="term" value="P:positive regulation of cell migration"/>
    <property type="evidence" value="ECO:0000318"/>
    <property type="project" value="GO_Central"/>
</dbReference>
<dbReference type="CDD" id="cd00272">
    <property type="entry name" value="Chemokine_CC"/>
    <property type="match status" value="1"/>
</dbReference>
<dbReference type="FunFam" id="2.40.50.40:FF:000002">
    <property type="entry name" value="C-C motif chemokine"/>
    <property type="match status" value="1"/>
</dbReference>
<dbReference type="Gene3D" id="2.40.50.40">
    <property type="match status" value="1"/>
</dbReference>
<dbReference type="InterPro" id="IPR039809">
    <property type="entry name" value="Chemokine_b/g/d"/>
</dbReference>
<dbReference type="InterPro" id="IPR000827">
    <property type="entry name" value="Chemokine_CC_CS"/>
</dbReference>
<dbReference type="InterPro" id="IPR001811">
    <property type="entry name" value="Chemokine_IL8-like_dom"/>
</dbReference>
<dbReference type="InterPro" id="IPR036048">
    <property type="entry name" value="Interleukin_8-like_sf"/>
</dbReference>
<dbReference type="PANTHER" id="PTHR12015:SF87">
    <property type="entry name" value="C-C MOTIF CHEMOKINE 6"/>
    <property type="match status" value="1"/>
</dbReference>
<dbReference type="PANTHER" id="PTHR12015">
    <property type="entry name" value="SMALL INDUCIBLE CYTOKINE A"/>
    <property type="match status" value="1"/>
</dbReference>
<dbReference type="Pfam" id="PF00048">
    <property type="entry name" value="IL8"/>
    <property type="match status" value="1"/>
</dbReference>
<dbReference type="SMART" id="SM00199">
    <property type="entry name" value="SCY"/>
    <property type="match status" value="1"/>
</dbReference>
<dbReference type="SUPFAM" id="SSF54117">
    <property type="entry name" value="Interleukin 8-like chemokines"/>
    <property type="match status" value="1"/>
</dbReference>
<dbReference type="PROSITE" id="PS00472">
    <property type="entry name" value="SMALL_CYTOKINES_CC"/>
    <property type="match status" value="1"/>
</dbReference>
<sequence length="115" mass="12652">MRHSKTAISFFILVAVLGSQAGLIQDTVKEDRPFNPTIIHQGFQDSSDCCFSYASQIPCSRFIYYFPTSGGCTKPGIIFVTRKRKRVCANPSDQRVQTCISTLKLGPRSGNSAIA</sequence>
<keyword id="KW-0145">Chemotaxis</keyword>
<keyword id="KW-0202">Cytokine</keyword>
<keyword id="KW-1015">Disulfide bond</keyword>
<keyword id="KW-1185">Reference proteome</keyword>
<keyword id="KW-0964">Secreted</keyword>
<keyword id="KW-0732">Signal</keyword>
<feature type="signal peptide" evidence="2">
    <location>
        <begin position="1"/>
        <end position="21"/>
    </location>
</feature>
<feature type="chain" id="PRO_0000041846" description="C-C motif chemokine 6">
    <location>
        <begin position="22"/>
        <end position="115"/>
    </location>
</feature>
<feature type="disulfide bond" evidence="1">
    <location>
        <begin position="49"/>
        <end position="72"/>
    </location>
</feature>
<feature type="disulfide bond" evidence="1">
    <location>
        <begin position="50"/>
        <end position="88"/>
    </location>
</feature>
<feature type="disulfide bond" evidence="1">
    <location>
        <begin position="59"/>
        <end position="99"/>
    </location>
</feature>
<feature type="sequence conflict" description="In Ref. 1; AAT39514." evidence="3" ref="1">
    <original>V</original>
    <variation>D</variation>
    <location>
        <position position="16"/>
    </location>
</feature>
<organism>
    <name type="scientific">Rattus norvegicus</name>
    <name type="common">Rat</name>
    <dbReference type="NCBI Taxonomy" id="10116"/>
    <lineage>
        <taxon>Eukaryota</taxon>
        <taxon>Metazoa</taxon>
        <taxon>Chordata</taxon>
        <taxon>Craniata</taxon>
        <taxon>Vertebrata</taxon>
        <taxon>Euteleostomi</taxon>
        <taxon>Mammalia</taxon>
        <taxon>Eutheria</taxon>
        <taxon>Euarchontoglires</taxon>
        <taxon>Glires</taxon>
        <taxon>Rodentia</taxon>
        <taxon>Myomorpha</taxon>
        <taxon>Muroidea</taxon>
        <taxon>Muridae</taxon>
        <taxon>Murinae</taxon>
        <taxon>Rattus</taxon>
    </lineage>
</organism>
<evidence type="ECO:0000250" key="1"/>
<evidence type="ECO:0000255" key="2"/>
<evidence type="ECO:0000305" key="3"/>
<protein>
    <recommendedName>
        <fullName>C-C motif chemokine 6</fullName>
    </recommendedName>
    <alternativeName>
        <fullName>Small-inducible cytokine A6</fullName>
    </alternativeName>
</protein>
<name>CCL6_RAT</name>
<comment type="subcellular location">
    <subcellularLocation>
        <location evidence="1">Secreted</location>
    </subcellularLocation>
</comment>
<comment type="similarity">
    <text evidence="3">Belongs to the intercrine beta (chemokine CC) family.</text>
</comment>
<comment type="sequence caution" evidence="3">
    <conflict type="erroneous initiation">
        <sequence resource="EMBL-CDS" id="AAT39514"/>
    </conflict>
</comment>
<gene>
    <name type="primary">Ccl6</name>
</gene>
<reference key="1">
    <citation type="submission" date="2004-05" db="EMBL/GenBank/DDBJ databases">
        <title>Molecular cloning and characterization of a rat chemokine-like cytokine.</title>
        <authorList>
            <person name="Guo B."/>
            <person name="Li W."/>
            <person name="Zhang S."/>
        </authorList>
    </citation>
    <scope>NUCLEOTIDE SEQUENCE [MRNA]</scope>
</reference>
<reference key="2">
    <citation type="journal article" date="2007" name="Genomics">
        <title>Fine-mapping and comprehensive transcript analysis reveals nonsynonymous variants within a novel 1.17 Mb blood pressure QTL region on rat chromosome 10.</title>
        <authorList>
            <person name="Saad Y."/>
            <person name="Garrett M.R."/>
            <person name="Manickavasagam E."/>
            <person name="Yerga-Woolwine S."/>
            <person name="Farms P."/>
            <person name="Radecki T."/>
            <person name="Joe B."/>
        </authorList>
    </citation>
    <scope>NUCLEOTIDE SEQUENCE [MRNA]</scope>
    <source>
        <strain>Dahl salt-sensitive</strain>
        <strain>Lewis</strain>
    </source>
</reference>
<reference key="3">
    <citation type="journal article" date="2004" name="Genome Res.">
        <title>The status, quality, and expansion of the NIH full-length cDNA project: the Mammalian Gene Collection (MGC).</title>
        <authorList>
            <consortium name="The MGC Project Team"/>
        </authorList>
    </citation>
    <scope>NUCLEOTIDE SEQUENCE [LARGE SCALE MRNA]</scope>
    <source>
        <tissue>Lung</tissue>
    </source>
</reference>